<reference key="1">
    <citation type="journal article" date="2007" name="J. Bacteriol.">
        <title>The genome sequence of avian pathogenic Escherichia coli strain O1:K1:H7 shares strong similarities with human extraintestinal pathogenic E. coli genomes.</title>
        <authorList>
            <person name="Johnson T.J."/>
            <person name="Kariyawasam S."/>
            <person name="Wannemuehler Y."/>
            <person name="Mangiamele P."/>
            <person name="Johnson S.J."/>
            <person name="Doetkott C."/>
            <person name="Skyberg J.A."/>
            <person name="Lynne A.M."/>
            <person name="Johnson J.R."/>
            <person name="Nolan L.K."/>
        </authorList>
    </citation>
    <scope>NUCLEOTIDE SEQUENCE [LARGE SCALE GENOMIC DNA]</scope>
</reference>
<keyword id="KW-0489">Methyltransferase</keyword>
<keyword id="KW-1185">Reference proteome</keyword>
<keyword id="KW-0949">S-adenosyl-L-methionine</keyword>
<keyword id="KW-0808">Transferase</keyword>
<keyword id="KW-0819">tRNA processing</keyword>
<sequence>MTPEHLPTEQYEAQLAEKVVRLQSMMAPFSDLVPEVFRSPVSHYRMRAEFRIWHDGDDLYHIIFDQQTKSRIRVDSFPAASELINQLMTAMIAGVRNNPILRHKLFQIDYLTTLSNQAVVSLLYHKKLDDEWRQQAEALRDALRAQNLNVHLIGRATKTKIALDQDYIDERLPIAGKEMIYRQVENSFTQPNAAMNIQMLEWALDVTKGSKGDLLELYCGNGNFSLALARNFDRVLATEIAKPSVAAAQYNIAANHIDNVQIIRMAAEEFTQAMNGVREFNRLQGIDLKSYQCETIFVDPPRSGLDSETEKMVQAYPRILYISCNPETLCKNLETLSQTHKVERLALFDQFPYTHHMECGVLLTAK</sequence>
<dbReference type="EC" id="2.1.1.-" evidence="1"/>
<dbReference type="EC" id="2.1.1.35" evidence="1"/>
<dbReference type="EMBL" id="CP000468">
    <property type="protein sequence ID" value="ABJ03437.1"/>
    <property type="molecule type" value="Genomic_DNA"/>
</dbReference>
<dbReference type="RefSeq" id="WP_000187001.1">
    <property type="nucleotide sequence ID" value="NZ_CADILS010000014.1"/>
</dbReference>
<dbReference type="SMR" id="A1AIE7"/>
<dbReference type="KEGG" id="ecv:APECO1_2498"/>
<dbReference type="HOGENOM" id="CLU_043022_0_0_6"/>
<dbReference type="Proteomes" id="UP000008216">
    <property type="component" value="Chromosome"/>
</dbReference>
<dbReference type="GO" id="GO:0005829">
    <property type="term" value="C:cytosol"/>
    <property type="evidence" value="ECO:0007669"/>
    <property type="project" value="TreeGrafter"/>
</dbReference>
<dbReference type="GO" id="GO:0019843">
    <property type="term" value="F:rRNA binding"/>
    <property type="evidence" value="ECO:0007669"/>
    <property type="project" value="TreeGrafter"/>
</dbReference>
<dbReference type="GO" id="GO:0030697">
    <property type="term" value="F:tRNA (uracil(54)-C5)-methyltransferase activity, S-adenosyl methionine-dependent"/>
    <property type="evidence" value="ECO:0007669"/>
    <property type="project" value="UniProtKB-UniRule"/>
</dbReference>
<dbReference type="GO" id="GO:0000049">
    <property type="term" value="F:tRNA binding"/>
    <property type="evidence" value="ECO:0007669"/>
    <property type="project" value="TreeGrafter"/>
</dbReference>
<dbReference type="GO" id="GO:0030488">
    <property type="term" value="P:tRNA methylation"/>
    <property type="evidence" value="ECO:0007669"/>
    <property type="project" value="UniProtKB-UniRule"/>
</dbReference>
<dbReference type="CDD" id="cd02440">
    <property type="entry name" value="AdoMet_MTases"/>
    <property type="match status" value="1"/>
</dbReference>
<dbReference type="FunFam" id="2.40.50.1070:FF:000001">
    <property type="entry name" value="tRNA/tmRNA (uracil-C(5))-methyltransferase"/>
    <property type="match status" value="1"/>
</dbReference>
<dbReference type="FunFam" id="3.40.50.150:FF:000012">
    <property type="entry name" value="tRNA/tmRNA (uracil-C(5))-methyltransferase"/>
    <property type="match status" value="1"/>
</dbReference>
<dbReference type="Gene3D" id="2.40.50.1070">
    <property type="match status" value="1"/>
</dbReference>
<dbReference type="Gene3D" id="3.40.50.150">
    <property type="entry name" value="Vaccinia Virus protein VP39"/>
    <property type="match status" value="1"/>
</dbReference>
<dbReference type="HAMAP" id="MF_01011">
    <property type="entry name" value="RNA_methyltr_TrmA"/>
    <property type="match status" value="1"/>
</dbReference>
<dbReference type="InterPro" id="IPR030390">
    <property type="entry name" value="MeTrfase_TrmA_AS"/>
</dbReference>
<dbReference type="InterPro" id="IPR030391">
    <property type="entry name" value="MeTrfase_TrmA_CS"/>
</dbReference>
<dbReference type="InterPro" id="IPR029063">
    <property type="entry name" value="SAM-dependent_MTases_sf"/>
</dbReference>
<dbReference type="InterPro" id="IPR011869">
    <property type="entry name" value="TrmA_MeTrfase"/>
</dbReference>
<dbReference type="InterPro" id="IPR010280">
    <property type="entry name" value="U5_MeTrfase_fam"/>
</dbReference>
<dbReference type="NCBIfam" id="TIGR02143">
    <property type="entry name" value="trmA_only"/>
    <property type="match status" value="1"/>
</dbReference>
<dbReference type="PANTHER" id="PTHR47790">
    <property type="entry name" value="TRNA/TMRNA (URACIL-C(5))-METHYLTRANSFERASE"/>
    <property type="match status" value="1"/>
</dbReference>
<dbReference type="PANTHER" id="PTHR47790:SF2">
    <property type="entry name" value="TRNA_TMRNA (URACIL-C(5))-METHYLTRANSFERASE"/>
    <property type="match status" value="1"/>
</dbReference>
<dbReference type="Pfam" id="PF05958">
    <property type="entry name" value="tRNA_U5-meth_tr"/>
    <property type="match status" value="1"/>
</dbReference>
<dbReference type="SUPFAM" id="SSF53335">
    <property type="entry name" value="S-adenosyl-L-methionine-dependent methyltransferases"/>
    <property type="match status" value="1"/>
</dbReference>
<dbReference type="PROSITE" id="PS51687">
    <property type="entry name" value="SAM_MT_RNA_M5U"/>
    <property type="match status" value="1"/>
</dbReference>
<dbReference type="PROSITE" id="PS01230">
    <property type="entry name" value="TRMA_1"/>
    <property type="match status" value="1"/>
</dbReference>
<dbReference type="PROSITE" id="PS01231">
    <property type="entry name" value="TRMA_2"/>
    <property type="match status" value="1"/>
</dbReference>
<feature type="chain" id="PRO_0000281442" description="tRNA/tmRNA (uracil-C(5))-methyltransferase">
    <location>
        <begin position="1"/>
        <end position="366"/>
    </location>
</feature>
<feature type="active site" description="Nucleophile" evidence="1">
    <location>
        <position position="324"/>
    </location>
</feature>
<feature type="active site" description="Proton acceptor" evidence="1">
    <location>
        <position position="358"/>
    </location>
</feature>
<feature type="binding site" evidence="1">
    <location>
        <position position="190"/>
    </location>
    <ligand>
        <name>S-adenosyl-L-methionine</name>
        <dbReference type="ChEBI" id="CHEBI:59789"/>
    </ligand>
</feature>
<feature type="binding site" evidence="1">
    <location>
        <position position="218"/>
    </location>
    <ligand>
        <name>S-adenosyl-L-methionine</name>
        <dbReference type="ChEBI" id="CHEBI:59789"/>
    </ligand>
</feature>
<feature type="binding site" evidence="1">
    <location>
        <position position="223"/>
    </location>
    <ligand>
        <name>S-adenosyl-L-methionine</name>
        <dbReference type="ChEBI" id="CHEBI:59789"/>
    </ligand>
</feature>
<feature type="binding site" evidence="1">
    <location>
        <position position="239"/>
    </location>
    <ligand>
        <name>S-adenosyl-L-methionine</name>
        <dbReference type="ChEBI" id="CHEBI:59789"/>
    </ligand>
</feature>
<feature type="binding site" evidence="1">
    <location>
        <position position="299"/>
    </location>
    <ligand>
        <name>S-adenosyl-L-methionine</name>
        <dbReference type="ChEBI" id="CHEBI:59789"/>
    </ligand>
</feature>
<comment type="function">
    <text evidence="1">Dual-specificity methyltransferase that catalyzes the formation of 5-methyluridine at position 54 (m5U54) in all tRNAs, and that of position 341 (m5U341) in tmRNA (transfer-mRNA).</text>
</comment>
<comment type="catalytic activity">
    <reaction evidence="1">
        <text>uridine(54) in tRNA + S-adenosyl-L-methionine = 5-methyluridine(54) in tRNA + S-adenosyl-L-homocysteine + H(+)</text>
        <dbReference type="Rhea" id="RHEA:42712"/>
        <dbReference type="Rhea" id="RHEA-COMP:10167"/>
        <dbReference type="Rhea" id="RHEA-COMP:10193"/>
        <dbReference type="ChEBI" id="CHEBI:15378"/>
        <dbReference type="ChEBI" id="CHEBI:57856"/>
        <dbReference type="ChEBI" id="CHEBI:59789"/>
        <dbReference type="ChEBI" id="CHEBI:65315"/>
        <dbReference type="ChEBI" id="CHEBI:74447"/>
        <dbReference type="EC" id="2.1.1.35"/>
    </reaction>
</comment>
<comment type="catalytic activity">
    <reaction evidence="1">
        <text>uridine(341) in tmRNA + S-adenosyl-L-methionine = 5-methyluridine(341) in tmRNA + S-adenosyl-L-homocysteine + H(+)</text>
        <dbReference type="Rhea" id="RHEA:43612"/>
        <dbReference type="Rhea" id="RHEA-COMP:10630"/>
        <dbReference type="Rhea" id="RHEA-COMP:10631"/>
        <dbReference type="ChEBI" id="CHEBI:15378"/>
        <dbReference type="ChEBI" id="CHEBI:57856"/>
        <dbReference type="ChEBI" id="CHEBI:59789"/>
        <dbReference type="ChEBI" id="CHEBI:65315"/>
        <dbReference type="ChEBI" id="CHEBI:74447"/>
    </reaction>
</comment>
<comment type="similarity">
    <text evidence="1">Belongs to the class I-like SAM-binding methyltransferase superfamily. RNA M5U methyltransferase family. TrmA subfamily.</text>
</comment>
<gene>
    <name evidence="1" type="primary">trmA</name>
    <name type="ordered locus">Ecok1_39430</name>
    <name type="ORF">APECO1_2498</name>
</gene>
<evidence type="ECO:0000255" key="1">
    <source>
        <dbReference type="HAMAP-Rule" id="MF_01011"/>
    </source>
</evidence>
<protein>
    <recommendedName>
        <fullName evidence="1">tRNA/tmRNA (uracil-C(5))-methyltransferase</fullName>
        <ecNumber evidence="1">2.1.1.-</ecNumber>
        <ecNumber evidence="1">2.1.1.35</ecNumber>
    </recommendedName>
    <alternativeName>
        <fullName evidence="1">tRNA (uracil(54)-C(5))-methyltransferase</fullName>
    </alternativeName>
    <alternativeName>
        <fullName evidence="1">tRNA(m5U54)-methyltransferase</fullName>
        <shortName evidence="1">RUMT</shortName>
    </alternativeName>
    <alternativeName>
        <fullName evidence="1">tmRNA (uracil(341)-C(5))-methyltransferase</fullName>
    </alternativeName>
</protein>
<accession>A1AIE7</accession>
<organism>
    <name type="scientific">Escherichia coli O1:K1 / APEC</name>
    <dbReference type="NCBI Taxonomy" id="405955"/>
    <lineage>
        <taxon>Bacteria</taxon>
        <taxon>Pseudomonadati</taxon>
        <taxon>Pseudomonadota</taxon>
        <taxon>Gammaproteobacteria</taxon>
        <taxon>Enterobacterales</taxon>
        <taxon>Enterobacteriaceae</taxon>
        <taxon>Escherichia</taxon>
    </lineage>
</organism>
<name>TRMA_ECOK1</name>
<proteinExistence type="inferred from homology"/>